<keyword id="KW-1035">Host cytoplasm</keyword>
<keyword id="KW-1185">Reference proteome</keyword>
<keyword id="KW-0964">Secreted</keyword>
<keyword id="KW-0843">Virulence</keyword>
<gene>
    <name type="primary">steB</name>
    <name type="ordered locus">STM1629</name>
</gene>
<accession>Q8ZPA6</accession>
<organism>
    <name type="scientific">Salmonella typhimurium (strain LT2 / SGSC1412 / ATCC 700720)</name>
    <dbReference type="NCBI Taxonomy" id="99287"/>
    <lineage>
        <taxon>Bacteria</taxon>
        <taxon>Pseudomonadati</taxon>
        <taxon>Pseudomonadota</taxon>
        <taxon>Gammaproteobacteria</taxon>
        <taxon>Enterobacterales</taxon>
        <taxon>Enterobacteriaceae</taxon>
        <taxon>Salmonella</taxon>
    </lineage>
</organism>
<dbReference type="EMBL" id="AE006468">
    <property type="protein sequence ID" value="AAL20547.1"/>
    <property type="molecule type" value="Genomic_DNA"/>
</dbReference>
<dbReference type="RefSeq" id="NP_448047.1">
    <property type="nucleotide sequence ID" value="NC_003197.2"/>
</dbReference>
<dbReference type="RefSeq" id="WP_001540100.1">
    <property type="nucleotide sequence ID" value="NC_003197.2"/>
</dbReference>
<dbReference type="STRING" id="99287.STM1629"/>
<dbReference type="PaxDb" id="99287-STM1629"/>
<dbReference type="GeneID" id="1253147"/>
<dbReference type="KEGG" id="stm:STM1629"/>
<dbReference type="HOGENOM" id="CLU_1892472_0_0_6"/>
<dbReference type="OMA" id="GCKEASR"/>
<dbReference type="BioCyc" id="SENT99287:STM1629-MONOMER"/>
<dbReference type="Proteomes" id="UP000001014">
    <property type="component" value="Chromosome"/>
</dbReference>
<dbReference type="GO" id="GO:0005576">
    <property type="term" value="C:extracellular region"/>
    <property type="evidence" value="ECO:0007669"/>
    <property type="project" value="UniProtKB-SubCell"/>
</dbReference>
<dbReference type="GO" id="GO:0030430">
    <property type="term" value="C:host cell cytoplasm"/>
    <property type="evidence" value="ECO:0007669"/>
    <property type="project" value="UniProtKB-SubCell"/>
</dbReference>
<name>STEB_SALTY</name>
<comment type="function">
    <text evidence="1">Effector proteins function to alter host cell physiology and promote bacterial survival in host tissues.</text>
</comment>
<comment type="subcellular location">
    <subcellularLocation>
        <location evidence="1">Secreted</location>
    </subcellularLocation>
    <subcellularLocation>
        <location evidence="1">Host cytoplasm</location>
    </subcellularLocation>
    <text evidence="1">Secreted via type III secretion systems 1 and 2 (SPI-1 and SPI-2 T3SS), and delivered into the host cytoplasm.</text>
</comment>
<evidence type="ECO:0000250" key="1"/>
<sequence length="133" mass="14389">MPISICKHGAPFVVQHENRYGSGASQSSSLSKSIRHISNSHEEIKFISCYSANGACFSNAQMLANASGRPVIGYYGKINKLTASLDNSGRIFRPQHKLAANICYVGNRLLSAPVQLGFGLKHLLTCHSNGNVR</sequence>
<protein>
    <recommendedName>
        <fullName>Secreted effector protein SteB</fullName>
    </recommendedName>
    <alternativeName>
        <fullName>Salmonella translocated effector B</fullName>
    </alternativeName>
</protein>
<reference key="1">
    <citation type="journal article" date="2001" name="Nature">
        <title>Complete genome sequence of Salmonella enterica serovar Typhimurium LT2.</title>
        <authorList>
            <person name="McClelland M."/>
            <person name="Sanderson K.E."/>
            <person name="Spieth J."/>
            <person name="Clifton S.W."/>
            <person name="Latreille P."/>
            <person name="Courtney L."/>
            <person name="Porwollik S."/>
            <person name="Ali J."/>
            <person name="Dante M."/>
            <person name="Du F."/>
            <person name="Hou S."/>
            <person name="Layman D."/>
            <person name="Leonard S."/>
            <person name="Nguyen C."/>
            <person name="Scott K."/>
            <person name="Holmes A."/>
            <person name="Grewal N."/>
            <person name="Mulvaney E."/>
            <person name="Ryan E."/>
            <person name="Sun H."/>
            <person name="Florea L."/>
            <person name="Miller W."/>
            <person name="Stoneking T."/>
            <person name="Nhan M."/>
            <person name="Waterston R."/>
            <person name="Wilson R.K."/>
        </authorList>
    </citation>
    <scope>NUCLEOTIDE SEQUENCE [LARGE SCALE GENOMIC DNA]</scope>
    <source>
        <strain>LT2 / SGSC1412 / ATCC 700720</strain>
    </source>
</reference>
<proteinExistence type="inferred from homology"/>
<feature type="chain" id="PRO_0000391637" description="Secreted effector protein SteB">
    <location>
        <begin position="1"/>
        <end position="133"/>
    </location>
</feature>